<comment type="similarity">
    <text evidence="1">Belongs to the universal ribosomal protein uS9 family.</text>
</comment>
<sequence length="161" mass="17352">MAQISDSLDVAPESFSTETPNEEAPKAPRAVLNVSGGAVGRRKQATARVRLVPGSGSITVNGREFADYFPNKLHQQLVNDPFKVLDLLGSYDVVARISGGGPSGQAGALRLGIARALNEIDEENNRAVLKKNGFLSRDARVKERKKAGLKKARKAPQFSKR</sequence>
<name>RS9_CLASE</name>
<dbReference type="EMBL" id="AM849034">
    <property type="protein sequence ID" value="CAQ00442.1"/>
    <property type="molecule type" value="Genomic_DNA"/>
</dbReference>
<dbReference type="RefSeq" id="WP_012297782.1">
    <property type="nucleotide sequence ID" value="NZ_MZMM01000001.1"/>
</dbReference>
<dbReference type="SMR" id="B0RB77"/>
<dbReference type="STRING" id="31964.CMS0321"/>
<dbReference type="KEGG" id="cms:CMS0321"/>
<dbReference type="eggNOG" id="COG0103">
    <property type="taxonomic scope" value="Bacteria"/>
</dbReference>
<dbReference type="HOGENOM" id="CLU_046483_2_0_11"/>
<dbReference type="Proteomes" id="UP000001318">
    <property type="component" value="Chromosome"/>
</dbReference>
<dbReference type="GO" id="GO:0005737">
    <property type="term" value="C:cytoplasm"/>
    <property type="evidence" value="ECO:0007669"/>
    <property type="project" value="UniProtKB-ARBA"/>
</dbReference>
<dbReference type="GO" id="GO:0015935">
    <property type="term" value="C:small ribosomal subunit"/>
    <property type="evidence" value="ECO:0007669"/>
    <property type="project" value="TreeGrafter"/>
</dbReference>
<dbReference type="GO" id="GO:0003723">
    <property type="term" value="F:RNA binding"/>
    <property type="evidence" value="ECO:0007669"/>
    <property type="project" value="TreeGrafter"/>
</dbReference>
<dbReference type="GO" id="GO:0003735">
    <property type="term" value="F:structural constituent of ribosome"/>
    <property type="evidence" value="ECO:0007669"/>
    <property type="project" value="InterPro"/>
</dbReference>
<dbReference type="GO" id="GO:0006412">
    <property type="term" value="P:translation"/>
    <property type="evidence" value="ECO:0007669"/>
    <property type="project" value="UniProtKB-UniRule"/>
</dbReference>
<dbReference type="FunFam" id="3.30.230.10:FF:000001">
    <property type="entry name" value="30S ribosomal protein S9"/>
    <property type="match status" value="1"/>
</dbReference>
<dbReference type="Gene3D" id="3.30.230.10">
    <property type="match status" value="1"/>
</dbReference>
<dbReference type="HAMAP" id="MF_00532_B">
    <property type="entry name" value="Ribosomal_uS9_B"/>
    <property type="match status" value="1"/>
</dbReference>
<dbReference type="InterPro" id="IPR020568">
    <property type="entry name" value="Ribosomal_Su5_D2-typ_SF"/>
</dbReference>
<dbReference type="InterPro" id="IPR000754">
    <property type="entry name" value="Ribosomal_uS9"/>
</dbReference>
<dbReference type="InterPro" id="IPR023035">
    <property type="entry name" value="Ribosomal_uS9_bac/plastid"/>
</dbReference>
<dbReference type="InterPro" id="IPR020574">
    <property type="entry name" value="Ribosomal_uS9_CS"/>
</dbReference>
<dbReference type="InterPro" id="IPR014721">
    <property type="entry name" value="Ribsml_uS5_D2-typ_fold_subgr"/>
</dbReference>
<dbReference type="NCBIfam" id="NF001099">
    <property type="entry name" value="PRK00132.1"/>
    <property type="match status" value="1"/>
</dbReference>
<dbReference type="PANTHER" id="PTHR21569">
    <property type="entry name" value="RIBOSOMAL PROTEIN S9"/>
    <property type="match status" value="1"/>
</dbReference>
<dbReference type="PANTHER" id="PTHR21569:SF1">
    <property type="entry name" value="SMALL RIBOSOMAL SUBUNIT PROTEIN US9M"/>
    <property type="match status" value="1"/>
</dbReference>
<dbReference type="Pfam" id="PF00380">
    <property type="entry name" value="Ribosomal_S9"/>
    <property type="match status" value="1"/>
</dbReference>
<dbReference type="SUPFAM" id="SSF54211">
    <property type="entry name" value="Ribosomal protein S5 domain 2-like"/>
    <property type="match status" value="1"/>
</dbReference>
<dbReference type="PROSITE" id="PS00360">
    <property type="entry name" value="RIBOSOMAL_S9"/>
    <property type="match status" value="1"/>
</dbReference>
<keyword id="KW-0687">Ribonucleoprotein</keyword>
<keyword id="KW-0689">Ribosomal protein</keyword>
<reference key="1">
    <citation type="journal article" date="2008" name="J. Bacteriol.">
        <title>Genome of the actinomycete plant pathogen Clavibacter michiganensis subsp. sepedonicus suggests recent niche adaptation.</title>
        <authorList>
            <person name="Bentley S.D."/>
            <person name="Corton C."/>
            <person name="Brown S.E."/>
            <person name="Barron A."/>
            <person name="Clark L."/>
            <person name="Doggett J."/>
            <person name="Harris B."/>
            <person name="Ormond D."/>
            <person name="Quail M.A."/>
            <person name="May G."/>
            <person name="Francis D."/>
            <person name="Knudson D."/>
            <person name="Parkhill J."/>
            <person name="Ishimaru C.A."/>
        </authorList>
    </citation>
    <scope>NUCLEOTIDE SEQUENCE [LARGE SCALE GENOMIC DNA]</scope>
    <source>
        <strain>ATCC 33113 / DSM 20744 / JCM 9667 / LMG 2889 / ICMP 2535 / C-1</strain>
    </source>
</reference>
<evidence type="ECO:0000255" key="1">
    <source>
        <dbReference type="HAMAP-Rule" id="MF_00532"/>
    </source>
</evidence>
<evidence type="ECO:0000256" key="2">
    <source>
        <dbReference type="SAM" id="MobiDB-lite"/>
    </source>
</evidence>
<evidence type="ECO:0000305" key="3"/>
<protein>
    <recommendedName>
        <fullName evidence="1">Small ribosomal subunit protein uS9</fullName>
    </recommendedName>
    <alternativeName>
        <fullName evidence="3">30S ribosomal protein S9</fullName>
    </alternativeName>
</protein>
<gene>
    <name evidence="1" type="primary">rpsI</name>
    <name type="ordered locus">CMS0321</name>
</gene>
<accession>B0RB77</accession>
<proteinExistence type="inferred from homology"/>
<feature type="chain" id="PRO_1000081807" description="Small ribosomal subunit protein uS9">
    <location>
        <begin position="1"/>
        <end position="161"/>
    </location>
</feature>
<feature type="region of interest" description="Disordered" evidence="2">
    <location>
        <begin position="1"/>
        <end position="28"/>
    </location>
</feature>
<feature type="region of interest" description="Disordered" evidence="2">
    <location>
        <begin position="142"/>
        <end position="161"/>
    </location>
</feature>
<organism>
    <name type="scientific">Clavibacter sepedonicus</name>
    <name type="common">Clavibacter michiganensis subsp. sepedonicus</name>
    <dbReference type="NCBI Taxonomy" id="31964"/>
    <lineage>
        <taxon>Bacteria</taxon>
        <taxon>Bacillati</taxon>
        <taxon>Actinomycetota</taxon>
        <taxon>Actinomycetes</taxon>
        <taxon>Micrococcales</taxon>
        <taxon>Microbacteriaceae</taxon>
        <taxon>Clavibacter</taxon>
    </lineage>
</organism>